<sequence>MPFLDKVKQQYEDWTRITPSNLLYDRALLLLFFVLLLIGLLAVSSASIPVGTRLFKDPFYFAKRDAIYVFLSCVTCYLCVQVPMEKWEQWHVRLFAFAIFLLILVLIPGIGLSVNGARRWIPMVLFNFQPAEFAKLALTCFLASYFTRKYDEVRSRKLSAFKPFALMGLMGLFLLSQPDLGSTVVLFVITFGLLFIVGANFWQFVGLMAFGGLLFVWLVLSSAYRLKRFTGFLDPFKDPYGTGFQLSNSLMAFGRGEWVGEGLGNSIQKLEYLPEAHTDFVMAVVGEEFGFLGILVIVILLGLLIFRAMKIGRESLLLEQRFKGFFAFGISFWIFFQGFVNLGMSLGLLPTKGLTFPLISYGGSSLIIMSMTIGLLLRIDHENRLMRIGQARLRDD</sequence>
<name>FTSW_PASMU</name>
<evidence type="ECO:0000255" key="1"/>
<evidence type="ECO:0000255" key="2">
    <source>
        <dbReference type="HAMAP-Rule" id="MF_00913"/>
    </source>
</evidence>
<organism>
    <name type="scientific">Pasteurella multocida (strain Pm70)</name>
    <dbReference type="NCBI Taxonomy" id="272843"/>
    <lineage>
        <taxon>Bacteria</taxon>
        <taxon>Pseudomonadati</taxon>
        <taxon>Pseudomonadota</taxon>
        <taxon>Gammaproteobacteria</taxon>
        <taxon>Pasteurellales</taxon>
        <taxon>Pasteurellaceae</taxon>
        <taxon>Pasteurella</taxon>
    </lineage>
</organism>
<accession>Q9CPA9</accession>
<proteinExistence type="inferred from homology"/>
<protein>
    <recommendedName>
        <fullName evidence="2">Probable peptidoglycan glycosyltransferase FtsW</fullName>
        <shortName evidence="2">PGT</shortName>
        <ecNumber evidence="2">2.4.99.28</ecNumber>
    </recommendedName>
    <alternativeName>
        <fullName evidence="2">Cell division protein FtsW</fullName>
    </alternativeName>
    <alternativeName>
        <fullName evidence="2">Cell wall polymerase</fullName>
    </alternativeName>
    <alternativeName>
        <fullName evidence="2">Peptidoglycan polymerase</fullName>
        <shortName evidence="2">PG polymerase</shortName>
    </alternativeName>
</protein>
<keyword id="KW-0131">Cell cycle</keyword>
<keyword id="KW-0132">Cell division</keyword>
<keyword id="KW-0997">Cell inner membrane</keyword>
<keyword id="KW-1003">Cell membrane</keyword>
<keyword id="KW-0133">Cell shape</keyword>
<keyword id="KW-0961">Cell wall biogenesis/degradation</keyword>
<keyword id="KW-0328">Glycosyltransferase</keyword>
<keyword id="KW-0472">Membrane</keyword>
<keyword id="KW-0573">Peptidoglycan synthesis</keyword>
<keyword id="KW-1185">Reference proteome</keyword>
<keyword id="KW-0808">Transferase</keyword>
<keyword id="KW-0812">Transmembrane</keyword>
<keyword id="KW-1133">Transmembrane helix</keyword>
<reference key="1">
    <citation type="journal article" date="2001" name="Proc. Natl. Acad. Sci. U.S.A.">
        <title>Complete genomic sequence of Pasteurella multocida Pm70.</title>
        <authorList>
            <person name="May B.J."/>
            <person name="Zhang Q."/>
            <person name="Li L.L."/>
            <person name="Paustian M.L."/>
            <person name="Whittam T.S."/>
            <person name="Kapur V."/>
        </authorList>
    </citation>
    <scope>NUCLEOTIDE SEQUENCE [LARGE SCALE GENOMIC DNA]</scope>
    <source>
        <strain>Pm70</strain>
    </source>
</reference>
<feature type="chain" id="PRO_0000415204" description="Probable peptidoglycan glycosyltransferase FtsW">
    <location>
        <begin position="1"/>
        <end position="396"/>
    </location>
</feature>
<feature type="topological domain" description="Cytoplasmic" evidence="1">
    <location>
        <begin position="1"/>
        <end position="27"/>
    </location>
</feature>
<feature type="transmembrane region" description="Helical" evidence="2">
    <location>
        <begin position="28"/>
        <end position="48"/>
    </location>
</feature>
<feature type="topological domain" description="Periplasmic" evidence="1">
    <location>
        <begin position="49"/>
        <end position="64"/>
    </location>
</feature>
<feature type="transmembrane region" description="Helical" evidence="2">
    <location>
        <begin position="65"/>
        <end position="85"/>
    </location>
</feature>
<feature type="topological domain" description="Cytoplasmic" evidence="1">
    <location>
        <begin position="86"/>
        <end position="93"/>
    </location>
</feature>
<feature type="transmembrane region" description="Helical" evidence="2">
    <location>
        <begin position="94"/>
        <end position="114"/>
    </location>
</feature>
<feature type="topological domain" description="Periplasmic" evidence="1">
    <location>
        <begin position="115"/>
        <end position="122"/>
    </location>
</feature>
<feature type="transmembrane region" description="Helical" evidence="2">
    <location>
        <begin position="123"/>
        <end position="143"/>
    </location>
</feature>
<feature type="topological domain" description="Cytoplasmic" evidence="1">
    <location>
        <begin position="144"/>
        <end position="157"/>
    </location>
</feature>
<feature type="transmembrane region" description="Helical" evidence="2">
    <location>
        <begin position="158"/>
        <end position="178"/>
    </location>
</feature>
<feature type="topological domain" description="Periplasmic" evidence="1">
    <location>
        <begin position="179"/>
        <end position="183"/>
    </location>
</feature>
<feature type="transmembrane region" description="Helical" evidence="2">
    <location>
        <begin position="184"/>
        <end position="204"/>
    </location>
</feature>
<feature type="transmembrane region" description="Helical" evidence="2">
    <location>
        <begin position="205"/>
        <end position="225"/>
    </location>
</feature>
<feature type="topological domain" description="Periplasmic" evidence="1">
    <location>
        <begin position="226"/>
        <end position="285"/>
    </location>
</feature>
<feature type="transmembrane region" description="Helical" evidence="2">
    <location>
        <begin position="286"/>
        <end position="306"/>
    </location>
</feature>
<feature type="topological domain" description="Cytoplasmic" evidence="1">
    <location>
        <begin position="307"/>
        <end position="323"/>
    </location>
</feature>
<feature type="transmembrane region" description="Helical" evidence="2">
    <location>
        <begin position="324"/>
        <end position="344"/>
    </location>
</feature>
<feature type="topological domain" description="Periplasmic" evidence="1">
    <location>
        <begin position="345"/>
        <end position="355"/>
    </location>
</feature>
<feature type="transmembrane region" description="Helical" evidence="2">
    <location>
        <begin position="356"/>
        <end position="376"/>
    </location>
</feature>
<feature type="topological domain" description="Cytoplasmic" evidence="1">
    <location>
        <begin position="377"/>
        <end position="396"/>
    </location>
</feature>
<gene>
    <name evidence="2" type="primary">ftsW</name>
    <name type="ordered locus">PM0141</name>
</gene>
<dbReference type="EC" id="2.4.99.28" evidence="2"/>
<dbReference type="EMBL" id="AE004439">
    <property type="protein sequence ID" value="AAK02225.1"/>
    <property type="molecule type" value="Genomic_DNA"/>
</dbReference>
<dbReference type="RefSeq" id="WP_005723039.1">
    <property type="nucleotide sequence ID" value="NC_002663.1"/>
</dbReference>
<dbReference type="SMR" id="Q9CPA9"/>
<dbReference type="STRING" id="272843.PM0141"/>
<dbReference type="EnsemblBacteria" id="AAK02225">
    <property type="protein sequence ID" value="AAK02225"/>
    <property type="gene ID" value="PM0141"/>
</dbReference>
<dbReference type="KEGG" id="pmu:PM0141"/>
<dbReference type="PATRIC" id="fig|272843.6.peg.146"/>
<dbReference type="HOGENOM" id="CLU_029243_1_1_6"/>
<dbReference type="OrthoDB" id="9768187at2"/>
<dbReference type="UniPathway" id="UPA00219"/>
<dbReference type="Proteomes" id="UP000000809">
    <property type="component" value="Chromosome"/>
</dbReference>
<dbReference type="GO" id="GO:0032153">
    <property type="term" value="C:cell division site"/>
    <property type="evidence" value="ECO:0007669"/>
    <property type="project" value="UniProtKB-UniRule"/>
</dbReference>
<dbReference type="GO" id="GO:0005886">
    <property type="term" value="C:plasma membrane"/>
    <property type="evidence" value="ECO:0007669"/>
    <property type="project" value="UniProtKB-SubCell"/>
</dbReference>
<dbReference type="GO" id="GO:0015648">
    <property type="term" value="F:lipid-linked peptidoglycan transporter activity"/>
    <property type="evidence" value="ECO:0007669"/>
    <property type="project" value="TreeGrafter"/>
</dbReference>
<dbReference type="GO" id="GO:0008955">
    <property type="term" value="F:peptidoglycan glycosyltransferase activity"/>
    <property type="evidence" value="ECO:0007669"/>
    <property type="project" value="UniProtKB-UniRule"/>
</dbReference>
<dbReference type="GO" id="GO:0071555">
    <property type="term" value="P:cell wall organization"/>
    <property type="evidence" value="ECO:0007669"/>
    <property type="project" value="UniProtKB-KW"/>
</dbReference>
<dbReference type="GO" id="GO:0043093">
    <property type="term" value="P:FtsZ-dependent cytokinesis"/>
    <property type="evidence" value="ECO:0007669"/>
    <property type="project" value="UniProtKB-UniRule"/>
</dbReference>
<dbReference type="GO" id="GO:0009252">
    <property type="term" value="P:peptidoglycan biosynthetic process"/>
    <property type="evidence" value="ECO:0007669"/>
    <property type="project" value="UniProtKB-UniRule"/>
</dbReference>
<dbReference type="GO" id="GO:0008360">
    <property type="term" value="P:regulation of cell shape"/>
    <property type="evidence" value="ECO:0007669"/>
    <property type="project" value="UniProtKB-KW"/>
</dbReference>
<dbReference type="HAMAP" id="MF_00913">
    <property type="entry name" value="PGT_FtsW_proteobact"/>
    <property type="match status" value="1"/>
</dbReference>
<dbReference type="InterPro" id="IPR018365">
    <property type="entry name" value="Cell_cycle_FtsW-rel_CS"/>
</dbReference>
<dbReference type="InterPro" id="IPR013437">
    <property type="entry name" value="FtsW"/>
</dbReference>
<dbReference type="InterPro" id="IPR001182">
    <property type="entry name" value="FtsW/RodA"/>
</dbReference>
<dbReference type="NCBIfam" id="TIGR02614">
    <property type="entry name" value="ftsW"/>
    <property type="match status" value="1"/>
</dbReference>
<dbReference type="PANTHER" id="PTHR30474">
    <property type="entry name" value="CELL CYCLE PROTEIN"/>
    <property type="match status" value="1"/>
</dbReference>
<dbReference type="PANTHER" id="PTHR30474:SF2">
    <property type="entry name" value="PEPTIDOGLYCAN GLYCOSYLTRANSFERASE FTSW-RELATED"/>
    <property type="match status" value="1"/>
</dbReference>
<dbReference type="Pfam" id="PF01098">
    <property type="entry name" value="FTSW_RODA_SPOVE"/>
    <property type="match status" value="1"/>
</dbReference>
<dbReference type="PROSITE" id="PS00428">
    <property type="entry name" value="FTSW_RODA_SPOVE"/>
    <property type="match status" value="1"/>
</dbReference>
<comment type="function">
    <text evidence="2">Peptidoglycan polymerase that is essential for cell division.</text>
</comment>
<comment type="catalytic activity">
    <reaction evidence="2">
        <text>[GlcNAc-(1-&gt;4)-Mur2Ac(oyl-L-Ala-gamma-D-Glu-L-Lys-D-Ala-D-Ala)](n)-di-trans,octa-cis-undecaprenyl diphosphate + beta-D-GlcNAc-(1-&gt;4)-Mur2Ac(oyl-L-Ala-gamma-D-Glu-L-Lys-D-Ala-D-Ala)-di-trans,octa-cis-undecaprenyl diphosphate = [GlcNAc-(1-&gt;4)-Mur2Ac(oyl-L-Ala-gamma-D-Glu-L-Lys-D-Ala-D-Ala)](n+1)-di-trans,octa-cis-undecaprenyl diphosphate + di-trans,octa-cis-undecaprenyl diphosphate + H(+)</text>
        <dbReference type="Rhea" id="RHEA:23708"/>
        <dbReference type="Rhea" id="RHEA-COMP:9602"/>
        <dbReference type="Rhea" id="RHEA-COMP:9603"/>
        <dbReference type="ChEBI" id="CHEBI:15378"/>
        <dbReference type="ChEBI" id="CHEBI:58405"/>
        <dbReference type="ChEBI" id="CHEBI:60033"/>
        <dbReference type="ChEBI" id="CHEBI:78435"/>
        <dbReference type="EC" id="2.4.99.28"/>
    </reaction>
</comment>
<comment type="pathway">
    <text evidence="2">Cell wall biogenesis; peptidoglycan biosynthesis.</text>
</comment>
<comment type="subcellular location">
    <subcellularLocation>
        <location evidence="2">Cell inner membrane</location>
        <topology evidence="2">Multi-pass membrane protein</topology>
    </subcellularLocation>
    <text evidence="2">Localizes to the division septum.</text>
</comment>
<comment type="similarity">
    <text evidence="2">Belongs to the SEDS family. FtsW subfamily.</text>
</comment>